<organism>
    <name type="scientific">Shewanella sp. (strain MR-7)</name>
    <dbReference type="NCBI Taxonomy" id="60481"/>
    <lineage>
        <taxon>Bacteria</taxon>
        <taxon>Pseudomonadati</taxon>
        <taxon>Pseudomonadota</taxon>
        <taxon>Gammaproteobacteria</taxon>
        <taxon>Alteromonadales</taxon>
        <taxon>Shewanellaceae</taxon>
        <taxon>Shewanella</taxon>
    </lineage>
</organism>
<keyword id="KW-0998">Cell outer membrane</keyword>
<keyword id="KW-0143">Chaperone</keyword>
<keyword id="KW-0449">Lipoprotein</keyword>
<keyword id="KW-0472">Membrane</keyword>
<keyword id="KW-0564">Palmitate</keyword>
<keyword id="KW-0653">Protein transport</keyword>
<keyword id="KW-0732">Signal</keyword>
<keyword id="KW-0813">Transport</keyword>
<sequence>MNNLKRFTKSIFSCIALSGLLFLGGCETLPPTTDLSPITVDNATQAKAWELQGKLAIRTPQDKLSANLYWRHSEERDELTLTTMLGTTVLTLDATPNSAHLHIDGKDFRDSNAQALLERVSGWSIPINDLPLWITGQVGGLDRVITVDSNGKTKQIQNSQTLPPWVVTFLSWQPQSGAEVPYQLKLERGDLQLKLQLNQWQALGKPSILLGEKP</sequence>
<evidence type="ECO:0000255" key="1">
    <source>
        <dbReference type="HAMAP-Rule" id="MF_00233"/>
    </source>
</evidence>
<feature type="signal peptide" evidence="1">
    <location>
        <begin position="1"/>
        <end position="25"/>
    </location>
</feature>
<feature type="chain" id="PRO_1000021683" description="Outer-membrane lipoprotein LolB">
    <location>
        <begin position="26"/>
        <end position="214"/>
    </location>
</feature>
<feature type="lipid moiety-binding region" description="N-palmitoyl cysteine" evidence="1">
    <location>
        <position position="26"/>
    </location>
</feature>
<feature type="lipid moiety-binding region" description="S-diacylglycerol cysteine" evidence="1">
    <location>
        <position position="26"/>
    </location>
</feature>
<reference key="1">
    <citation type="submission" date="2006-08" db="EMBL/GenBank/DDBJ databases">
        <title>Complete sequence of chromosome 1 of Shewanella sp. MR-7.</title>
        <authorList>
            <person name="Copeland A."/>
            <person name="Lucas S."/>
            <person name="Lapidus A."/>
            <person name="Barry K."/>
            <person name="Detter J.C."/>
            <person name="Glavina del Rio T."/>
            <person name="Hammon N."/>
            <person name="Israni S."/>
            <person name="Dalin E."/>
            <person name="Tice H."/>
            <person name="Pitluck S."/>
            <person name="Kiss H."/>
            <person name="Brettin T."/>
            <person name="Bruce D."/>
            <person name="Han C."/>
            <person name="Tapia R."/>
            <person name="Gilna P."/>
            <person name="Schmutz J."/>
            <person name="Larimer F."/>
            <person name="Land M."/>
            <person name="Hauser L."/>
            <person name="Kyrpides N."/>
            <person name="Mikhailova N."/>
            <person name="Nealson K."/>
            <person name="Konstantinidis K."/>
            <person name="Klappenbach J."/>
            <person name="Tiedje J."/>
            <person name="Richardson P."/>
        </authorList>
    </citation>
    <scope>NUCLEOTIDE SEQUENCE [LARGE SCALE GENOMIC DNA]</scope>
    <source>
        <strain>MR-7</strain>
    </source>
</reference>
<dbReference type="EMBL" id="CP000444">
    <property type="protein sequence ID" value="ABI41795.1"/>
    <property type="molecule type" value="Genomic_DNA"/>
</dbReference>
<dbReference type="SMR" id="Q0HYL0"/>
<dbReference type="KEGG" id="shm:Shewmr7_0795"/>
<dbReference type="HOGENOM" id="CLU_092816_1_0_6"/>
<dbReference type="GO" id="GO:0009279">
    <property type="term" value="C:cell outer membrane"/>
    <property type="evidence" value="ECO:0007669"/>
    <property type="project" value="UniProtKB-SubCell"/>
</dbReference>
<dbReference type="GO" id="GO:0044874">
    <property type="term" value="P:lipoprotein localization to outer membrane"/>
    <property type="evidence" value="ECO:0007669"/>
    <property type="project" value="UniProtKB-UniRule"/>
</dbReference>
<dbReference type="GO" id="GO:0015031">
    <property type="term" value="P:protein transport"/>
    <property type="evidence" value="ECO:0007669"/>
    <property type="project" value="UniProtKB-KW"/>
</dbReference>
<dbReference type="CDD" id="cd16326">
    <property type="entry name" value="LolB"/>
    <property type="match status" value="1"/>
</dbReference>
<dbReference type="Gene3D" id="2.50.20.10">
    <property type="entry name" value="Lipoprotein localisation LolA/LolB/LppX"/>
    <property type="match status" value="1"/>
</dbReference>
<dbReference type="HAMAP" id="MF_00233">
    <property type="entry name" value="LolB"/>
    <property type="match status" value="1"/>
</dbReference>
<dbReference type="InterPro" id="IPR029046">
    <property type="entry name" value="LolA/LolB/LppX"/>
</dbReference>
<dbReference type="InterPro" id="IPR004565">
    <property type="entry name" value="OM_lipoprot_LolB"/>
</dbReference>
<dbReference type="NCBIfam" id="TIGR00548">
    <property type="entry name" value="lolB"/>
    <property type="match status" value="1"/>
</dbReference>
<dbReference type="Pfam" id="PF03550">
    <property type="entry name" value="LolB"/>
    <property type="match status" value="1"/>
</dbReference>
<dbReference type="SUPFAM" id="SSF89392">
    <property type="entry name" value="Prokaryotic lipoproteins and lipoprotein localization factors"/>
    <property type="match status" value="1"/>
</dbReference>
<dbReference type="PROSITE" id="PS51257">
    <property type="entry name" value="PROKAR_LIPOPROTEIN"/>
    <property type="match status" value="1"/>
</dbReference>
<accession>Q0HYL0</accession>
<comment type="function">
    <text evidence="1">Plays a critical role in the incorporation of lipoproteins in the outer membrane after they are released by the LolA protein.</text>
</comment>
<comment type="subunit">
    <text evidence="1">Monomer.</text>
</comment>
<comment type="subcellular location">
    <subcellularLocation>
        <location evidence="1">Cell outer membrane</location>
        <topology evidence="1">Lipid-anchor</topology>
    </subcellularLocation>
</comment>
<comment type="similarity">
    <text evidence="1">Belongs to the LolB family.</text>
</comment>
<protein>
    <recommendedName>
        <fullName evidence="1">Outer-membrane lipoprotein LolB</fullName>
    </recommendedName>
</protein>
<gene>
    <name evidence="1" type="primary">lolB</name>
    <name type="ordered locus">Shewmr7_0795</name>
</gene>
<proteinExistence type="inferred from homology"/>
<name>LOLB_SHESR</name>